<protein>
    <recommendedName>
        <fullName evidence="2">Cyclin-dependent kinase-like 3</fullName>
        <ecNumber>2.7.11.22</ecNumber>
    </recommendedName>
</protein>
<dbReference type="EC" id="2.7.11.22"/>
<dbReference type="EMBL" id="AB168359">
    <property type="protein sequence ID" value="BAE00482.1"/>
    <property type="molecule type" value="mRNA"/>
</dbReference>
<dbReference type="EMBL" id="AB168242">
    <property type="protein sequence ID" value="BAE00367.1"/>
    <property type="molecule type" value="mRNA"/>
</dbReference>
<dbReference type="RefSeq" id="NP_001270689.1">
    <property type="nucleotide sequence ID" value="NM_001283760.1"/>
</dbReference>
<dbReference type="SMR" id="Q4R8T9"/>
<dbReference type="STRING" id="9541.ENSMFAP00000015535"/>
<dbReference type="eggNOG" id="KOG0593">
    <property type="taxonomic scope" value="Eukaryota"/>
</dbReference>
<dbReference type="Proteomes" id="UP000233100">
    <property type="component" value="Unplaced"/>
</dbReference>
<dbReference type="GO" id="GO:0005737">
    <property type="term" value="C:cytoplasm"/>
    <property type="evidence" value="ECO:0007669"/>
    <property type="project" value="UniProtKB-SubCell"/>
</dbReference>
<dbReference type="GO" id="GO:0005634">
    <property type="term" value="C:nucleus"/>
    <property type="evidence" value="ECO:0007669"/>
    <property type="project" value="TreeGrafter"/>
</dbReference>
<dbReference type="GO" id="GO:0005524">
    <property type="term" value="F:ATP binding"/>
    <property type="evidence" value="ECO:0007669"/>
    <property type="project" value="UniProtKB-KW"/>
</dbReference>
<dbReference type="GO" id="GO:0004693">
    <property type="term" value="F:cyclin-dependent protein serine/threonine kinase activity"/>
    <property type="evidence" value="ECO:0007669"/>
    <property type="project" value="UniProtKB-EC"/>
</dbReference>
<dbReference type="GO" id="GO:0106310">
    <property type="term" value="F:protein serine kinase activity"/>
    <property type="evidence" value="ECO:0007669"/>
    <property type="project" value="RHEA"/>
</dbReference>
<dbReference type="GO" id="GO:0097484">
    <property type="term" value="P:dendrite extension"/>
    <property type="evidence" value="ECO:0007669"/>
    <property type="project" value="TreeGrafter"/>
</dbReference>
<dbReference type="GO" id="GO:0030517">
    <property type="term" value="P:negative regulation of axon extension"/>
    <property type="evidence" value="ECO:0007669"/>
    <property type="project" value="TreeGrafter"/>
</dbReference>
<dbReference type="GO" id="GO:0050775">
    <property type="term" value="P:positive regulation of dendrite morphogenesis"/>
    <property type="evidence" value="ECO:0007669"/>
    <property type="project" value="TreeGrafter"/>
</dbReference>
<dbReference type="CDD" id="cd07846">
    <property type="entry name" value="STKc_CDKL2_3"/>
    <property type="match status" value="1"/>
</dbReference>
<dbReference type="FunFam" id="3.30.200.20:FF:000049">
    <property type="entry name" value="cyclin-dependent kinase-like 1 isoform X1"/>
    <property type="match status" value="1"/>
</dbReference>
<dbReference type="FunFam" id="1.10.510.10:FF:000370">
    <property type="entry name" value="cyclin-dependent kinase-like 3 isoform X2"/>
    <property type="match status" value="1"/>
</dbReference>
<dbReference type="Gene3D" id="3.30.200.20">
    <property type="entry name" value="Phosphorylase Kinase, domain 1"/>
    <property type="match status" value="1"/>
</dbReference>
<dbReference type="Gene3D" id="1.10.510.10">
    <property type="entry name" value="Transferase(Phosphotransferase) domain 1"/>
    <property type="match status" value="1"/>
</dbReference>
<dbReference type="InterPro" id="IPR050108">
    <property type="entry name" value="CDK"/>
</dbReference>
<dbReference type="InterPro" id="IPR011009">
    <property type="entry name" value="Kinase-like_dom_sf"/>
</dbReference>
<dbReference type="InterPro" id="IPR000719">
    <property type="entry name" value="Prot_kinase_dom"/>
</dbReference>
<dbReference type="InterPro" id="IPR017441">
    <property type="entry name" value="Protein_kinase_ATP_BS"/>
</dbReference>
<dbReference type="InterPro" id="IPR008271">
    <property type="entry name" value="Ser/Thr_kinase_AS"/>
</dbReference>
<dbReference type="PANTHER" id="PTHR24056">
    <property type="entry name" value="CELL DIVISION PROTEIN KINASE"/>
    <property type="match status" value="1"/>
</dbReference>
<dbReference type="PANTHER" id="PTHR24056:SF177">
    <property type="entry name" value="CYCLIN-DEPENDENT KINASE-LIKE 3"/>
    <property type="match status" value="1"/>
</dbReference>
<dbReference type="Pfam" id="PF00069">
    <property type="entry name" value="Pkinase"/>
    <property type="match status" value="1"/>
</dbReference>
<dbReference type="SMART" id="SM00220">
    <property type="entry name" value="S_TKc"/>
    <property type="match status" value="1"/>
</dbReference>
<dbReference type="SUPFAM" id="SSF56112">
    <property type="entry name" value="Protein kinase-like (PK-like)"/>
    <property type="match status" value="1"/>
</dbReference>
<dbReference type="PROSITE" id="PS00107">
    <property type="entry name" value="PROTEIN_KINASE_ATP"/>
    <property type="match status" value="1"/>
</dbReference>
<dbReference type="PROSITE" id="PS50011">
    <property type="entry name" value="PROTEIN_KINASE_DOM"/>
    <property type="match status" value="1"/>
</dbReference>
<dbReference type="PROSITE" id="PS00108">
    <property type="entry name" value="PROTEIN_KINASE_ST"/>
    <property type="match status" value="1"/>
</dbReference>
<name>CDKL3_MACFA</name>
<keyword id="KW-0067">ATP-binding</keyword>
<keyword id="KW-0963">Cytoplasm</keyword>
<keyword id="KW-0418">Kinase</keyword>
<keyword id="KW-0547">Nucleotide-binding</keyword>
<keyword id="KW-0597">Phosphoprotein</keyword>
<keyword id="KW-1185">Reference proteome</keyword>
<keyword id="KW-0723">Serine/threonine-protein kinase</keyword>
<keyword id="KW-0808">Transferase</keyword>
<evidence type="ECO:0000250" key="1"/>
<evidence type="ECO:0000250" key="2">
    <source>
        <dbReference type="UniProtKB" id="Q8IVW4"/>
    </source>
</evidence>
<evidence type="ECO:0000250" key="3">
    <source>
        <dbReference type="UniProtKB" id="Q9JM01"/>
    </source>
</evidence>
<evidence type="ECO:0000255" key="4">
    <source>
        <dbReference type="PROSITE-ProRule" id="PRU00159"/>
    </source>
</evidence>
<evidence type="ECO:0000255" key="5">
    <source>
        <dbReference type="PROSITE-ProRule" id="PRU10027"/>
    </source>
</evidence>
<evidence type="ECO:0000256" key="6">
    <source>
        <dbReference type="SAM" id="MobiDB-lite"/>
    </source>
</evidence>
<evidence type="ECO:0000305" key="7"/>
<feature type="chain" id="PRO_0000085821" description="Cyclin-dependent kinase-like 3">
    <location>
        <begin position="1"/>
        <end position="590"/>
    </location>
</feature>
<feature type="domain" description="Protein kinase" evidence="4">
    <location>
        <begin position="4"/>
        <end position="286"/>
    </location>
</feature>
<feature type="region of interest" description="Disordered" evidence="6">
    <location>
        <begin position="459"/>
        <end position="508"/>
    </location>
</feature>
<feature type="region of interest" description="Disordered" evidence="6">
    <location>
        <begin position="547"/>
        <end position="590"/>
    </location>
</feature>
<feature type="short sequence motif" description="[NKR]KIAxRE">
    <location>
        <begin position="45"/>
        <end position="51"/>
    </location>
</feature>
<feature type="compositionally biased region" description="Polar residues" evidence="6">
    <location>
        <begin position="466"/>
        <end position="477"/>
    </location>
</feature>
<feature type="compositionally biased region" description="Basic and acidic residues" evidence="6">
    <location>
        <begin position="547"/>
        <end position="556"/>
    </location>
</feature>
<feature type="compositionally biased region" description="Basic and acidic residues" evidence="6">
    <location>
        <begin position="580"/>
        <end position="590"/>
    </location>
</feature>
<feature type="active site" description="Proton acceptor" evidence="4 5">
    <location>
        <position position="125"/>
    </location>
</feature>
<feature type="binding site" evidence="4">
    <location>
        <begin position="10"/>
        <end position="18"/>
    </location>
    <ligand>
        <name>ATP</name>
        <dbReference type="ChEBI" id="CHEBI:30616"/>
    </ligand>
</feature>
<feature type="binding site" evidence="4">
    <location>
        <position position="33"/>
    </location>
    <ligand>
        <name>ATP</name>
        <dbReference type="ChEBI" id="CHEBI:30616"/>
    </ligand>
</feature>
<feature type="modified residue" description="Phosphothreonine" evidence="3">
    <location>
        <position position="158"/>
    </location>
</feature>
<feature type="modified residue" description="Phosphotyrosine" evidence="3">
    <location>
        <position position="160"/>
    </location>
</feature>
<feature type="sequence conflict" description="In Ref. 1; BAE00367." evidence="7" ref="1">
    <location>
        <begin position="117"/>
        <end position="201"/>
    </location>
</feature>
<feature type="sequence conflict" description="In Ref. 1; BAE00367." evidence="7" ref="1">
    <original>G</original>
    <variation>E</variation>
    <location>
        <position position="490"/>
    </location>
</feature>
<feature type="sequence conflict" description="In Ref. 1; BAE00367." evidence="7" ref="1">
    <original>N</original>
    <variation>S</variation>
    <location>
        <position position="495"/>
    </location>
</feature>
<organism>
    <name type="scientific">Macaca fascicularis</name>
    <name type="common">Crab-eating macaque</name>
    <name type="synonym">Cynomolgus monkey</name>
    <dbReference type="NCBI Taxonomy" id="9541"/>
    <lineage>
        <taxon>Eukaryota</taxon>
        <taxon>Metazoa</taxon>
        <taxon>Chordata</taxon>
        <taxon>Craniata</taxon>
        <taxon>Vertebrata</taxon>
        <taxon>Euteleostomi</taxon>
        <taxon>Mammalia</taxon>
        <taxon>Eutheria</taxon>
        <taxon>Euarchontoglires</taxon>
        <taxon>Primates</taxon>
        <taxon>Haplorrhini</taxon>
        <taxon>Catarrhini</taxon>
        <taxon>Cercopithecidae</taxon>
        <taxon>Cercopithecinae</taxon>
        <taxon>Macaca</taxon>
    </lineage>
</organism>
<reference key="1">
    <citation type="submission" date="2005-06" db="EMBL/GenBank/DDBJ databases">
        <title>DNA sequences of macaque genes expressed in brain or testis and its evolutionary implications.</title>
        <authorList>
            <consortium name="International consortium for macaque cDNA sequencing and analysis"/>
        </authorList>
    </citation>
    <scope>NUCLEOTIDE SEQUENCE [LARGE SCALE MRNA]</scope>
    <source>
        <tissue>Testis</tissue>
    </source>
</reference>
<accession>Q4R8T9</accession>
<accession>Q4R954</accession>
<proteinExistence type="evidence at transcript level"/>
<gene>
    <name evidence="2" type="primary">CDKL3</name>
    <name type="ORF">QtsA-10691</name>
    <name type="ORF">QtsA-11477</name>
</gene>
<comment type="catalytic activity">
    <reaction>
        <text>L-seryl-[protein] + ATP = O-phospho-L-seryl-[protein] + ADP + H(+)</text>
        <dbReference type="Rhea" id="RHEA:17989"/>
        <dbReference type="Rhea" id="RHEA-COMP:9863"/>
        <dbReference type="Rhea" id="RHEA-COMP:11604"/>
        <dbReference type="ChEBI" id="CHEBI:15378"/>
        <dbReference type="ChEBI" id="CHEBI:29999"/>
        <dbReference type="ChEBI" id="CHEBI:30616"/>
        <dbReference type="ChEBI" id="CHEBI:83421"/>
        <dbReference type="ChEBI" id="CHEBI:456216"/>
        <dbReference type="EC" id="2.7.11.22"/>
    </reaction>
</comment>
<comment type="catalytic activity">
    <reaction>
        <text>L-threonyl-[protein] + ATP = O-phospho-L-threonyl-[protein] + ADP + H(+)</text>
        <dbReference type="Rhea" id="RHEA:46608"/>
        <dbReference type="Rhea" id="RHEA-COMP:11060"/>
        <dbReference type="Rhea" id="RHEA-COMP:11605"/>
        <dbReference type="ChEBI" id="CHEBI:15378"/>
        <dbReference type="ChEBI" id="CHEBI:30013"/>
        <dbReference type="ChEBI" id="CHEBI:30616"/>
        <dbReference type="ChEBI" id="CHEBI:61977"/>
        <dbReference type="ChEBI" id="CHEBI:456216"/>
        <dbReference type="EC" id="2.7.11.22"/>
    </reaction>
</comment>
<comment type="subcellular location">
    <subcellularLocation>
        <location evidence="1">Cytoplasm</location>
    </subcellularLocation>
</comment>
<comment type="domain">
    <text>The [NKR]KIAxRE motif seems to be a cyclin-binding region.</text>
</comment>
<comment type="similarity">
    <text evidence="7">Belongs to the protein kinase superfamily. CMGC Ser/Thr protein kinase family. CDC2/CDKX subfamily.</text>
</comment>
<sequence length="590" mass="67204">MEMYETLGKVGEGSYGTVMKCKHKNTGQIVAIKIFYERPEQSVNKIAMREIKFLKQFHHENLVNLIEVFRQKKKIHLVFEFIDHTVLDELQHYCHGLESKRLRKYLFQILRAIDYLHSNNIIHRDIKPENILVSQSGITKLCDFGFARTLAAPGDIYTDYVATRWYRAPELVLKDTSYGKPVDIWALGCMIIEMATGNPYLPSSSDLDLLHKIVLKVGNLSPHLQNIFSKSPIFAGVVLPQVQHPKNARKKYPKLNGLLADIVHACLQIDPADRISSSDLLHHEYFTRDGFIEKFMPELKAKLLQEAKVNSLIKPKESSKENELRKDERKTVYTNTLLSSSVLGKEIEKEKKPKEIKVRVIKVKGGRGDISEPKKKEYEGGLCQQDANENVHPMSPDTKLVTIEPPNPINPSTNCNGLKENPHCGGSMTMPPINLTNSNLMAANLNSNLFHPSVRLTERAKKRRTSSQSIGQVMPNSRQEDPGPIQSQMGKGIFNERTGHSDQMSNENKRKLNFSRSDRKEFHFPELPVTIQPKDTKGMEVKQIKMLKRESKKTDSSKIPTLLNVDQNQEKQENTGNAQTERKKNLPDVE</sequence>